<evidence type="ECO:0000255" key="1">
    <source>
        <dbReference type="HAMAP-Rule" id="MF_00531"/>
    </source>
</evidence>
<evidence type="ECO:0000305" key="2"/>
<sequence length="99" mass="11683">MKRSLKNNPFVANPLLRKMEKLNRREDKILIRTWSRASTIILTMIGHTIAIHNGKEHLPIYITDYMVGHKLGEFAPTINFHEHAKNDNKSRRSKMRIDY</sequence>
<gene>
    <name evidence="1" type="primary">rps19</name>
</gene>
<protein>
    <recommendedName>
        <fullName evidence="1">Small ribosomal subunit protein uS19c</fullName>
    </recommendedName>
    <alternativeName>
        <fullName evidence="2">30S ribosomal protein S19, chloroplastic</fullName>
    </alternativeName>
</protein>
<keyword id="KW-0150">Chloroplast</keyword>
<keyword id="KW-0934">Plastid</keyword>
<keyword id="KW-0687">Ribonucleoprotein</keyword>
<keyword id="KW-0689">Ribosomal protein</keyword>
<keyword id="KW-0694">RNA-binding</keyword>
<keyword id="KW-0699">rRNA-binding</keyword>
<accession>B0Z5G8</accession>
<name>RR19_OENPA</name>
<proteinExistence type="inferred from homology"/>
<dbReference type="EMBL" id="EU262891">
    <property type="protein sequence ID" value="ABX10161.1"/>
    <property type="molecule type" value="Genomic_DNA"/>
</dbReference>
<dbReference type="RefSeq" id="YP_001687491.1">
    <property type="nucleotide sequence ID" value="NC_010362.1"/>
</dbReference>
<dbReference type="SMR" id="B0Z5G8"/>
<dbReference type="GeneID" id="5955494"/>
<dbReference type="GO" id="GO:0009507">
    <property type="term" value="C:chloroplast"/>
    <property type="evidence" value="ECO:0007669"/>
    <property type="project" value="UniProtKB-SubCell"/>
</dbReference>
<dbReference type="GO" id="GO:0005763">
    <property type="term" value="C:mitochondrial small ribosomal subunit"/>
    <property type="evidence" value="ECO:0007669"/>
    <property type="project" value="TreeGrafter"/>
</dbReference>
<dbReference type="GO" id="GO:0019843">
    <property type="term" value="F:rRNA binding"/>
    <property type="evidence" value="ECO:0007669"/>
    <property type="project" value="UniProtKB-UniRule"/>
</dbReference>
<dbReference type="GO" id="GO:0003735">
    <property type="term" value="F:structural constituent of ribosome"/>
    <property type="evidence" value="ECO:0007669"/>
    <property type="project" value="InterPro"/>
</dbReference>
<dbReference type="GO" id="GO:0000028">
    <property type="term" value="P:ribosomal small subunit assembly"/>
    <property type="evidence" value="ECO:0007669"/>
    <property type="project" value="TreeGrafter"/>
</dbReference>
<dbReference type="GO" id="GO:0006412">
    <property type="term" value="P:translation"/>
    <property type="evidence" value="ECO:0007669"/>
    <property type="project" value="UniProtKB-UniRule"/>
</dbReference>
<dbReference type="FunFam" id="3.30.860.10:FF:000001">
    <property type="entry name" value="30S ribosomal protein S19"/>
    <property type="match status" value="1"/>
</dbReference>
<dbReference type="Gene3D" id="3.30.860.10">
    <property type="entry name" value="30s Ribosomal Protein S19, Chain A"/>
    <property type="match status" value="1"/>
</dbReference>
<dbReference type="HAMAP" id="MF_00531">
    <property type="entry name" value="Ribosomal_uS19"/>
    <property type="match status" value="1"/>
</dbReference>
<dbReference type="InterPro" id="IPR002222">
    <property type="entry name" value="Ribosomal_uS19"/>
</dbReference>
<dbReference type="InterPro" id="IPR005732">
    <property type="entry name" value="Ribosomal_uS19_bac-type"/>
</dbReference>
<dbReference type="InterPro" id="IPR020934">
    <property type="entry name" value="Ribosomal_uS19_CS"/>
</dbReference>
<dbReference type="InterPro" id="IPR023575">
    <property type="entry name" value="Ribosomal_uS19_SF"/>
</dbReference>
<dbReference type="NCBIfam" id="TIGR01050">
    <property type="entry name" value="rpsS_bact"/>
    <property type="match status" value="1"/>
</dbReference>
<dbReference type="PANTHER" id="PTHR11880">
    <property type="entry name" value="RIBOSOMAL PROTEIN S19P FAMILY MEMBER"/>
    <property type="match status" value="1"/>
</dbReference>
<dbReference type="PANTHER" id="PTHR11880:SF8">
    <property type="entry name" value="SMALL RIBOSOMAL SUBUNIT PROTEIN US19M"/>
    <property type="match status" value="1"/>
</dbReference>
<dbReference type="Pfam" id="PF00203">
    <property type="entry name" value="Ribosomal_S19"/>
    <property type="match status" value="1"/>
</dbReference>
<dbReference type="PIRSF" id="PIRSF002144">
    <property type="entry name" value="Ribosomal_S19"/>
    <property type="match status" value="1"/>
</dbReference>
<dbReference type="PRINTS" id="PR00975">
    <property type="entry name" value="RIBOSOMALS19"/>
</dbReference>
<dbReference type="SUPFAM" id="SSF54570">
    <property type="entry name" value="Ribosomal protein S19"/>
    <property type="match status" value="1"/>
</dbReference>
<dbReference type="PROSITE" id="PS00323">
    <property type="entry name" value="RIBOSOMAL_S19"/>
    <property type="match status" value="1"/>
</dbReference>
<feature type="chain" id="PRO_0000354370" description="Small ribosomal subunit protein uS19c">
    <location>
        <begin position="1"/>
        <end position="99"/>
    </location>
</feature>
<comment type="function">
    <text evidence="1">Protein S19 forms a complex with S13 that binds strongly to the 16S ribosomal RNA.</text>
</comment>
<comment type="subcellular location">
    <subcellularLocation>
        <location>Plastid</location>
        <location>Chloroplast</location>
    </subcellularLocation>
</comment>
<comment type="similarity">
    <text evidence="1">Belongs to the universal ribosomal protein uS19 family.</text>
</comment>
<geneLocation type="chloroplast"/>
<reference key="1">
    <citation type="journal article" date="2008" name="Nucleic Acids Res.">
        <title>The complete nucleotide sequences of the five genetically distinct plastid genomes of Oenothera, subsection Oenothera: I. Sequence evaluation and plastome evolution.</title>
        <authorList>
            <person name="Greiner S."/>
            <person name="Wang X."/>
            <person name="Rauwolf U."/>
            <person name="Silber M.V."/>
            <person name="Mayer K."/>
            <person name="Meurer J."/>
            <person name="Haberer G."/>
            <person name="Herrmann R.G."/>
        </authorList>
    </citation>
    <scope>NUCLEOTIDE SEQUENCE [LARGE SCALE GENOMIC DNA]</scope>
    <source>
        <strain>cv. Atrovirens</strain>
    </source>
</reference>
<organism>
    <name type="scientific">Oenothera parviflora</name>
    <name type="common">Small-flowered evening primrose</name>
    <name type="synonym">Oenothera cruciata</name>
    <dbReference type="NCBI Taxonomy" id="482429"/>
    <lineage>
        <taxon>Eukaryota</taxon>
        <taxon>Viridiplantae</taxon>
        <taxon>Streptophyta</taxon>
        <taxon>Embryophyta</taxon>
        <taxon>Tracheophyta</taxon>
        <taxon>Spermatophyta</taxon>
        <taxon>Magnoliopsida</taxon>
        <taxon>eudicotyledons</taxon>
        <taxon>Gunneridae</taxon>
        <taxon>Pentapetalae</taxon>
        <taxon>rosids</taxon>
        <taxon>malvids</taxon>
        <taxon>Myrtales</taxon>
        <taxon>Onagraceae</taxon>
        <taxon>Onagroideae</taxon>
        <taxon>Onagreae</taxon>
        <taxon>Oenothera</taxon>
    </lineage>
</organism>